<sequence>MAISKLHLLFLLSVFLSLHPLVLSDTADEEDVLLTGINSYRASLNLTTLIHNHNAECLADEIADQFKNQPCTNTTGSASVPGTTPGFPNLPNLLSKCRLNPTVTRDGAILPACVPNLDPSLVLTNFTMSQYSKDLNDSKFTGIGIGSDDNWIVVVLTTSTPEGSYSPASNSGAFAFGVNGLVSSSLMFLLFCFFMF</sequence>
<feature type="signal peptide" evidence="1">
    <location>
        <begin position="1"/>
        <end position="24"/>
    </location>
</feature>
<feature type="chain" id="PRO_0000036271" description="Uncharacterized GPI-anchored protein At5g19250">
    <location>
        <begin position="25"/>
        <end position="171"/>
    </location>
</feature>
<feature type="propeptide" id="PRO_0000036272" description="Removed in mature form" evidence="2">
    <location>
        <begin position="172"/>
        <end position="196"/>
    </location>
</feature>
<feature type="lipid moiety-binding region" description="GPI-anchor amidated serine" evidence="1">
    <location>
        <position position="171"/>
    </location>
</feature>
<feature type="glycosylation site" description="N-linked (GlcNAc...) asparagine" evidence="1">
    <location>
        <position position="45"/>
    </location>
</feature>
<feature type="glycosylation site" description="N-linked (GlcNAc...) asparagine" evidence="1">
    <location>
        <position position="73"/>
    </location>
</feature>
<feature type="glycosylation site" description="N-linked (GlcNAc...) asparagine" evidence="1">
    <location>
        <position position="125"/>
    </location>
</feature>
<feature type="glycosylation site" description="N-linked (GlcNAc...) asparagine" evidence="1">
    <location>
        <position position="136"/>
    </location>
</feature>
<evidence type="ECO:0000255" key="1"/>
<evidence type="ECO:0000305" key="2"/>
<organism>
    <name type="scientific">Arabidopsis thaliana</name>
    <name type="common">Mouse-ear cress</name>
    <dbReference type="NCBI Taxonomy" id="3702"/>
    <lineage>
        <taxon>Eukaryota</taxon>
        <taxon>Viridiplantae</taxon>
        <taxon>Streptophyta</taxon>
        <taxon>Embryophyta</taxon>
        <taxon>Tracheophyta</taxon>
        <taxon>Spermatophyta</taxon>
        <taxon>Magnoliopsida</taxon>
        <taxon>eudicotyledons</taxon>
        <taxon>Gunneridae</taxon>
        <taxon>Pentapetalae</taxon>
        <taxon>rosids</taxon>
        <taxon>malvids</taxon>
        <taxon>Brassicales</taxon>
        <taxon>Brassicaceae</taxon>
        <taxon>Camelineae</taxon>
        <taxon>Arabidopsis</taxon>
    </lineage>
</organism>
<keyword id="KW-1003">Cell membrane</keyword>
<keyword id="KW-0325">Glycoprotein</keyword>
<keyword id="KW-0336">GPI-anchor</keyword>
<keyword id="KW-0449">Lipoprotein</keyword>
<keyword id="KW-0472">Membrane</keyword>
<keyword id="KW-1185">Reference proteome</keyword>
<keyword id="KW-0732">Signal</keyword>
<accession>P59833</accession>
<accession>Q67ZQ2</accession>
<accession>Q6ID89</accession>
<reference key="1">
    <citation type="journal article" date="2000" name="Nature">
        <title>Sequence and analysis of chromosome 5 of the plant Arabidopsis thaliana.</title>
        <authorList>
            <person name="Tabata S."/>
            <person name="Kaneko T."/>
            <person name="Nakamura Y."/>
            <person name="Kotani H."/>
            <person name="Kato T."/>
            <person name="Asamizu E."/>
            <person name="Miyajima N."/>
            <person name="Sasamoto S."/>
            <person name="Kimura T."/>
            <person name="Hosouchi T."/>
            <person name="Kawashima K."/>
            <person name="Kohara M."/>
            <person name="Matsumoto M."/>
            <person name="Matsuno A."/>
            <person name="Muraki A."/>
            <person name="Nakayama S."/>
            <person name="Nakazaki N."/>
            <person name="Naruo K."/>
            <person name="Okumura S."/>
            <person name="Shinpo S."/>
            <person name="Takeuchi C."/>
            <person name="Wada T."/>
            <person name="Watanabe A."/>
            <person name="Yamada M."/>
            <person name="Yasuda M."/>
            <person name="Sato S."/>
            <person name="de la Bastide M."/>
            <person name="Huang E."/>
            <person name="Spiegel L."/>
            <person name="Gnoj L."/>
            <person name="O'Shaughnessy A."/>
            <person name="Preston R."/>
            <person name="Habermann K."/>
            <person name="Murray J."/>
            <person name="Johnson D."/>
            <person name="Rohlfing T."/>
            <person name="Nelson J."/>
            <person name="Stoneking T."/>
            <person name="Pepin K."/>
            <person name="Spieth J."/>
            <person name="Sekhon M."/>
            <person name="Armstrong J."/>
            <person name="Becker M."/>
            <person name="Belter E."/>
            <person name="Cordum H."/>
            <person name="Cordes M."/>
            <person name="Courtney L."/>
            <person name="Courtney W."/>
            <person name="Dante M."/>
            <person name="Du H."/>
            <person name="Edwards J."/>
            <person name="Fryman J."/>
            <person name="Haakensen B."/>
            <person name="Lamar E."/>
            <person name="Latreille P."/>
            <person name="Leonard S."/>
            <person name="Meyer R."/>
            <person name="Mulvaney E."/>
            <person name="Ozersky P."/>
            <person name="Riley A."/>
            <person name="Strowmatt C."/>
            <person name="Wagner-McPherson C."/>
            <person name="Wollam A."/>
            <person name="Yoakum M."/>
            <person name="Bell M."/>
            <person name="Dedhia N."/>
            <person name="Parnell L."/>
            <person name="Shah R."/>
            <person name="Rodriguez M."/>
            <person name="Hoon See L."/>
            <person name="Vil D."/>
            <person name="Baker J."/>
            <person name="Kirchoff K."/>
            <person name="Toth K."/>
            <person name="King L."/>
            <person name="Bahret A."/>
            <person name="Miller B."/>
            <person name="Marra M.A."/>
            <person name="Martienssen R."/>
            <person name="McCombie W.R."/>
            <person name="Wilson R.K."/>
            <person name="Murphy G."/>
            <person name="Bancroft I."/>
            <person name="Volckaert G."/>
            <person name="Wambutt R."/>
            <person name="Duesterhoeft A."/>
            <person name="Stiekema W."/>
            <person name="Pohl T."/>
            <person name="Entian K.-D."/>
            <person name="Terryn N."/>
            <person name="Hartley N."/>
            <person name="Bent E."/>
            <person name="Johnson S."/>
            <person name="Langham S.-A."/>
            <person name="McCullagh B."/>
            <person name="Robben J."/>
            <person name="Grymonprez B."/>
            <person name="Zimmermann W."/>
            <person name="Ramsperger U."/>
            <person name="Wedler H."/>
            <person name="Balke K."/>
            <person name="Wedler E."/>
            <person name="Peters S."/>
            <person name="van Staveren M."/>
            <person name="Dirkse W."/>
            <person name="Mooijman P."/>
            <person name="Klein Lankhorst R."/>
            <person name="Weitzenegger T."/>
            <person name="Bothe G."/>
            <person name="Rose M."/>
            <person name="Hauf J."/>
            <person name="Berneiser S."/>
            <person name="Hempel S."/>
            <person name="Feldpausch M."/>
            <person name="Lamberth S."/>
            <person name="Villarroel R."/>
            <person name="Gielen J."/>
            <person name="Ardiles W."/>
            <person name="Bents O."/>
            <person name="Lemcke K."/>
            <person name="Kolesov G."/>
            <person name="Mayer K.F.X."/>
            <person name="Rudd S."/>
            <person name="Schoof H."/>
            <person name="Schueller C."/>
            <person name="Zaccaria P."/>
            <person name="Mewes H.-W."/>
            <person name="Bevan M."/>
            <person name="Fransz P.F."/>
        </authorList>
    </citation>
    <scope>NUCLEOTIDE SEQUENCE [LARGE SCALE GENOMIC DNA]</scope>
    <source>
        <strain>cv. Columbia</strain>
    </source>
</reference>
<reference key="2">
    <citation type="journal article" date="2017" name="Plant J.">
        <title>Araport11: a complete reannotation of the Arabidopsis thaliana reference genome.</title>
        <authorList>
            <person name="Cheng C.Y."/>
            <person name="Krishnakumar V."/>
            <person name="Chan A.P."/>
            <person name="Thibaud-Nissen F."/>
            <person name="Schobel S."/>
            <person name="Town C.D."/>
        </authorList>
    </citation>
    <scope>GENOME REANNOTATION</scope>
    <source>
        <strain>cv. Columbia</strain>
    </source>
</reference>
<reference key="3">
    <citation type="submission" date="2004-07" db="EMBL/GenBank/DDBJ databases">
        <title>Arabidopsis ORF clones.</title>
        <authorList>
            <person name="Shinn P."/>
            <person name="Chen H."/>
            <person name="Cheuk R.F."/>
            <person name="Kim C.J."/>
            <person name="Ecker J.R."/>
        </authorList>
    </citation>
    <scope>NUCLEOTIDE SEQUENCE [LARGE SCALE MRNA]</scope>
    <source>
        <strain>cv. Columbia</strain>
    </source>
</reference>
<reference key="4">
    <citation type="submission" date="2004-09" db="EMBL/GenBank/DDBJ databases">
        <title>Large-scale analysis of RIKEN Arabidopsis full-length (RAFL) cDNAs.</title>
        <authorList>
            <person name="Totoki Y."/>
            <person name="Seki M."/>
            <person name="Ishida J."/>
            <person name="Nakajima M."/>
            <person name="Enju A."/>
            <person name="Kamiya A."/>
            <person name="Narusaka M."/>
            <person name="Shin-i T."/>
            <person name="Nakagawa M."/>
            <person name="Sakamoto N."/>
            <person name="Oishi K."/>
            <person name="Kohara Y."/>
            <person name="Kobayashi M."/>
            <person name="Toyoda A."/>
            <person name="Sakaki Y."/>
            <person name="Sakurai T."/>
            <person name="Iida K."/>
            <person name="Akiyama K."/>
            <person name="Satou M."/>
            <person name="Toyoda T."/>
            <person name="Konagaya A."/>
            <person name="Carninci P."/>
            <person name="Kawai J."/>
            <person name="Hayashizaki Y."/>
            <person name="Shinozaki K."/>
        </authorList>
    </citation>
    <scope>NUCLEOTIDE SEQUENCE [LARGE SCALE MRNA] OF 67-196</scope>
    <source>
        <strain>cv. Columbia</strain>
    </source>
</reference>
<protein>
    <recommendedName>
        <fullName>Uncharacterized GPI-anchored protein At5g19250</fullName>
    </recommendedName>
</protein>
<proteinExistence type="evidence at transcript level"/>
<name>UGPI3_ARATH</name>
<gene>
    <name type="ordered locus">At5g19250</name>
    <name type="ORF">T24G5.150</name>
</gene>
<dbReference type="EMBL" id="AC069326">
    <property type="status" value="NOT_ANNOTATED_CDS"/>
    <property type="molecule type" value="Genomic_DNA"/>
</dbReference>
<dbReference type="EMBL" id="CP002688">
    <property type="protein sequence ID" value="AED92675.1"/>
    <property type="molecule type" value="Genomic_DNA"/>
</dbReference>
<dbReference type="EMBL" id="BT014784">
    <property type="protein sequence ID" value="AAT41767.1"/>
    <property type="molecule type" value="mRNA"/>
</dbReference>
<dbReference type="EMBL" id="BT015011">
    <property type="protein sequence ID" value="AAT70462.1"/>
    <property type="molecule type" value="mRNA"/>
</dbReference>
<dbReference type="EMBL" id="AK176065">
    <property type="protein sequence ID" value="BAD43828.1"/>
    <property type="molecule type" value="mRNA"/>
</dbReference>
<dbReference type="RefSeq" id="NP_197426.1">
    <property type="nucleotide sequence ID" value="NM_121930.5"/>
</dbReference>
<dbReference type="SMR" id="P59833"/>
<dbReference type="BioGRID" id="17321">
    <property type="interactions" value="2"/>
</dbReference>
<dbReference type="FunCoup" id="P59833">
    <property type="interactions" value="749"/>
</dbReference>
<dbReference type="STRING" id="3702.P59833"/>
<dbReference type="GlyGen" id="P59833">
    <property type="glycosylation" value="5 sites"/>
</dbReference>
<dbReference type="PaxDb" id="3702-AT5G19250.1"/>
<dbReference type="ProteomicsDB" id="246393"/>
<dbReference type="EnsemblPlants" id="AT5G19250.1">
    <property type="protein sequence ID" value="AT5G19250.1"/>
    <property type="gene ID" value="AT5G19250"/>
</dbReference>
<dbReference type="GeneID" id="832045"/>
<dbReference type="Gramene" id="AT5G19250.1">
    <property type="protein sequence ID" value="AT5G19250.1"/>
    <property type="gene ID" value="AT5G19250"/>
</dbReference>
<dbReference type="KEGG" id="ath:AT5G19250"/>
<dbReference type="Araport" id="AT5G19250"/>
<dbReference type="TAIR" id="AT5G19250"/>
<dbReference type="eggNOG" id="ENOG502RYCU">
    <property type="taxonomic scope" value="Eukaryota"/>
</dbReference>
<dbReference type="HOGENOM" id="CLU_087436_1_0_1"/>
<dbReference type="InParanoid" id="P59833"/>
<dbReference type="OMA" id="NQPCTNM"/>
<dbReference type="OrthoDB" id="753138at2759"/>
<dbReference type="PhylomeDB" id="P59833"/>
<dbReference type="PRO" id="PR:P59833"/>
<dbReference type="Proteomes" id="UP000006548">
    <property type="component" value="Chromosome 5"/>
</dbReference>
<dbReference type="ExpressionAtlas" id="P59833">
    <property type="expression patterns" value="baseline and differential"/>
</dbReference>
<dbReference type="GO" id="GO:0005886">
    <property type="term" value="C:plasma membrane"/>
    <property type="evidence" value="ECO:0007669"/>
    <property type="project" value="UniProtKB-SubCell"/>
</dbReference>
<dbReference type="GO" id="GO:0009536">
    <property type="term" value="C:plastid"/>
    <property type="evidence" value="ECO:0007005"/>
    <property type="project" value="TAIR"/>
</dbReference>
<dbReference type="GO" id="GO:0098552">
    <property type="term" value="C:side of membrane"/>
    <property type="evidence" value="ECO:0007669"/>
    <property type="project" value="UniProtKB-KW"/>
</dbReference>
<dbReference type="InterPro" id="IPR045285">
    <property type="entry name" value="At5g19230-like"/>
</dbReference>
<dbReference type="PANTHER" id="PTHR33976:SF9">
    <property type="entry name" value="GPI-ANCHORED PROTEIN"/>
    <property type="match status" value="1"/>
</dbReference>
<dbReference type="PANTHER" id="PTHR33976">
    <property type="entry name" value="OS07G0645000 PROTEIN"/>
    <property type="match status" value="1"/>
</dbReference>
<comment type="subcellular location">
    <subcellularLocation>
        <location>Cell membrane</location>
        <topology>Lipid-anchor</topology>
        <topology>GPI-anchor</topology>
    </subcellularLocation>
</comment>
<comment type="similarity">
    <text evidence="2">Belongs to the UPF0277 family.</text>
</comment>